<proteinExistence type="inferred from homology"/>
<accession>Q7ME85</accession>
<sequence length="331" mass="37353">MMRNVLLLCGGGSSEHEISLLSSEYLQQQLGLIENVNVLKVEIKNEGWFDQKERLVYLDIHTKSVKSDEFNESIDIDFIVPCIHGFPGETGDIQSLFELAGIPYLGCGPEASSNSFNKITSKLWYDAIGIPNTPYLFLTENNEESHQLSREAFDKWGKLFVKAARQGSSVGCYSVTNIEQLSDAIDKAFGFSHQVLVEKAVKPRELEVSAYEMNGQLHISKPGEIIAPDGAFYSYDEKYSAGSHSITEVEAKNLTEQQLATIQLCSEKVFRQMNLRHLSRIDFFLTSEGEIYLNEVNTFPGMTKISMFPKMLQHNGHKFHEFLADCIERSL</sequence>
<evidence type="ECO:0000250" key="1"/>
<evidence type="ECO:0000255" key="2">
    <source>
        <dbReference type="HAMAP-Rule" id="MF_00047"/>
    </source>
</evidence>
<comment type="function">
    <text evidence="2">Cell wall formation.</text>
</comment>
<comment type="catalytic activity">
    <reaction evidence="2">
        <text>2 D-alanine + ATP = D-alanyl-D-alanine + ADP + phosphate + H(+)</text>
        <dbReference type="Rhea" id="RHEA:11224"/>
        <dbReference type="ChEBI" id="CHEBI:15378"/>
        <dbReference type="ChEBI" id="CHEBI:30616"/>
        <dbReference type="ChEBI" id="CHEBI:43474"/>
        <dbReference type="ChEBI" id="CHEBI:57416"/>
        <dbReference type="ChEBI" id="CHEBI:57822"/>
        <dbReference type="ChEBI" id="CHEBI:456216"/>
        <dbReference type="EC" id="6.3.2.4"/>
    </reaction>
</comment>
<comment type="cofactor">
    <cofactor evidence="1">
        <name>Mg(2+)</name>
        <dbReference type="ChEBI" id="CHEBI:18420"/>
    </cofactor>
    <cofactor evidence="1">
        <name>Mn(2+)</name>
        <dbReference type="ChEBI" id="CHEBI:29035"/>
    </cofactor>
    <text evidence="1">Binds 2 magnesium or manganese ions per subunit.</text>
</comment>
<comment type="pathway">
    <text evidence="2">Cell wall biogenesis; peptidoglycan biosynthesis.</text>
</comment>
<comment type="subcellular location">
    <subcellularLocation>
        <location evidence="2">Cytoplasm</location>
    </subcellularLocation>
</comment>
<comment type="similarity">
    <text evidence="2">Belongs to the D-alanine--D-alanine ligase family.</text>
</comment>
<reference key="1">
    <citation type="journal article" date="2003" name="Genome Res.">
        <title>Comparative genome analysis of Vibrio vulnificus, a marine pathogen.</title>
        <authorList>
            <person name="Chen C.-Y."/>
            <person name="Wu K.-M."/>
            <person name="Chang Y.-C."/>
            <person name="Chang C.-H."/>
            <person name="Tsai H.-C."/>
            <person name="Liao T.-L."/>
            <person name="Liu Y.-M."/>
            <person name="Chen H.-J."/>
            <person name="Shen A.B.-T."/>
            <person name="Li J.-C."/>
            <person name="Su T.-L."/>
            <person name="Shao C.-P."/>
            <person name="Lee C.-T."/>
            <person name="Hor L.-I."/>
            <person name="Tsai S.-F."/>
        </authorList>
    </citation>
    <scope>NUCLEOTIDE SEQUENCE [LARGE SCALE GENOMIC DNA]</scope>
    <source>
        <strain>YJ016</strain>
    </source>
</reference>
<feature type="chain" id="PRO_0000177904" description="D-alanine--D-alanine ligase">
    <location>
        <begin position="1"/>
        <end position="331"/>
    </location>
</feature>
<feature type="domain" description="ATP-grasp" evidence="2">
    <location>
        <begin position="122"/>
        <end position="328"/>
    </location>
</feature>
<feature type="binding site" evidence="2">
    <location>
        <begin position="152"/>
        <end position="207"/>
    </location>
    <ligand>
        <name>ATP</name>
        <dbReference type="ChEBI" id="CHEBI:30616"/>
    </ligand>
</feature>
<feature type="binding site" evidence="2">
    <location>
        <position position="282"/>
    </location>
    <ligand>
        <name>Mg(2+)</name>
        <dbReference type="ChEBI" id="CHEBI:18420"/>
        <label>1</label>
    </ligand>
</feature>
<feature type="binding site" evidence="2">
    <location>
        <position position="295"/>
    </location>
    <ligand>
        <name>Mg(2+)</name>
        <dbReference type="ChEBI" id="CHEBI:18420"/>
        <label>1</label>
    </ligand>
</feature>
<feature type="binding site" evidence="2">
    <location>
        <position position="295"/>
    </location>
    <ligand>
        <name>Mg(2+)</name>
        <dbReference type="ChEBI" id="CHEBI:18420"/>
        <label>2</label>
    </ligand>
</feature>
<feature type="binding site" evidence="2">
    <location>
        <position position="297"/>
    </location>
    <ligand>
        <name>Mg(2+)</name>
        <dbReference type="ChEBI" id="CHEBI:18420"/>
        <label>2</label>
    </ligand>
</feature>
<gene>
    <name evidence="2" type="primary">ddl</name>
    <name type="ordered locus">VVA0785</name>
</gene>
<organism>
    <name type="scientific">Vibrio vulnificus (strain YJ016)</name>
    <dbReference type="NCBI Taxonomy" id="196600"/>
    <lineage>
        <taxon>Bacteria</taxon>
        <taxon>Pseudomonadati</taxon>
        <taxon>Pseudomonadota</taxon>
        <taxon>Gammaproteobacteria</taxon>
        <taxon>Vibrionales</taxon>
        <taxon>Vibrionaceae</taxon>
        <taxon>Vibrio</taxon>
    </lineage>
</organism>
<keyword id="KW-0067">ATP-binding</keyword>
<keyword id="KW-0133">Cell shape</keyword>
<keyword id="KW-0961">Cell wall biogenesis/degradation</keyword>
<keyword id="KW-0963">Cytoplasm</keyword>
<keyword id="KW-0436">Ligase</keyword>
<keyword id="KW-0460">Magnesium</keyword>
<keyword id="KW-0464">Manganese</keyword>
<keyword id="KW-0479">Metal-binding</keyword>
<keyword id="KW-0547">Nucleotide-binding</keyword>
<keyword id="KW-0573">Peptidoglycan synthesis</keyword>
<name>DDL_VIBVY</name>
<protein>
    <recommendedName>
        <fullName evidence="2">D-alanine--D-alanine ligase</fullName>
        <ecNumber evidence="2">6.3.2.4</ecNumber>
    </recommendedName>
    <alternativeName>
        <fullName evidence="2">D-Ala-D-Ala ligase</fullName>
    </alternativeName>
    <alternativeName>
        <fullName evidence="2">D-alanylalanine synthetase</fullName>
    </alternativeName>
</protein>
<dbReference type="EC" id="6.3.2.4" evidence="2"/>
<dbReference type="EMBL" id="BA000038">
    <property type="protein sequence ID" value="BAC96811.1"/>
    <property type="molecule type" value="Genomic_DNA"/>
</dbReference>
<dbReference type="RefSeq" id="WP_011152112.1">
    <property type="nucleotide sequence ID" value="NC_005140.1"/>
</dbReference>
<dbReference type="SMR" id="Q7ME85"/>
<dbReference type="STRING" id="672.VV93_v1c37750"/>
<dbReference type="KEGG" id="vvy:VVA0785"/>
<dbReference type="PATRIC" id="fig|196600.6.peg.3976"/>
<dbReference type="eggNOG" id="COG1181">
    <property type="taxonomic scope" value="Bacteria"/>
</dbReference>
<dbReference type="HOGENOM" id="CLU_039268_0_0_6"/>
<dbReference type="UniPathway" id="UPA00219"/>
<dbReference type="Proteomes" id="UP000002675">
    <property type="component" value="Chromosome II"/>
</dbReference>
<dbReference type="GO" id="GO:0005829">
    <property type="term" value="C:cytosol"/>
    <property type="evidence" value="ECO:0007669"/>
    <property type="project" value="TreeGrafter"/>
</dbReference>
<dbReference type="GO" id="GO:0005524">
    <property type="term" value="F:ATP binding"/>
    <property type="evidence" value="ECO:0007669"/>
    <property type="project" value="UniProtKB-KW"/>
</dbReference>
<dbReference type="GO" id="GO:0008716">
    <property type="term" value="F:D-alanine-D-alanine ligase activity"/>
    <property type="evidence" value="ECO:0007669"/>
    <property type="project" value="UniProtKB-UniRule"/>
</dbReference>
<dbReference type="GO" id="GO:0046872">
    <property type="term" value="F:metal ion binding"/>
    <property type="evidence" value="ECO:0007669"/>
    <property type="project" value="UniProtKB-KW"/>
</dbReference>
<dbReference type="GO" id="GO:0071555">
    <property type="term" value="P:cell wall organization"/>
    <property type="evidence" value="ECO:0007669"/>
    <property type="project" value="UniProtKB-KW"/>
</dbReference>
<dbReference type="GO" id="GO:0009252">
    <property type="term" value="P:peptidoglycan biosynthetic process"/>
    <property type="evidence" value="ECO:0007669"/>
    <property type="project" value="UniProtKB-UniRule"/>
</dbReference>
<dbReference type="GO" id="GO:0008360">
    <property type="term" value="P:regulation of cell shape"/>
    <property type="evidence" value="ECO:0007669"/>
    <property type="project" value="UniProtKB-KW"/>
</dbReference>
<dbReference type="Gene3D" id="3.40.50.20">
    <property type="match status" value="1"/>
</dbReference>
<dbReference type="Gene3D" id="3.30.1490.20">
    <property type="entry name" value="ATP-grasp fold, A domain"/>
    <property type="match status" value="1"/>
</dbReference>
<dbReference type="Gene3D" id="3.30.470.20">
    <property type="entry name" value="ATP-grasp fold, B domain"/>
    <property type="match status" value="1"/>
</dbReference>
<dbReference type="HAMAP" id="MF_00047">
    <property type="entry name" value="Dala_Dala_lig"/>
    <property type="match status" value="1"/>
</dbReference>
<dbReference type="InterPro" id="IPR011761">
    <property type="entry name" value="ATP-grasp"/>
</dbReference>
<dbReference type="InterPro" id="IPR013815">
    <property type="entry name" value="ATP_grasp_subdomain_1"/>
</dbReference>
<dbReference type="InterPro" id="IPR000291">
    <property type="entry name" value="D-Ala_lig_Van_CS"/>
</dbReference>
<dbReference type="InterPro" id="IPR005905">
    <property type="entry name" value="D_ala_D_ala"/>
</dbReference>
<dbReference type="InterPro" id="IPR011095">
    <property type="entry name" value="Dala_Dala_lig_C"/>
</dbReference>
<dbReference type="InterPro" id="IPR011127">
    <property type="entry name" value="Dala_Dala_lig_N"/>
</dbReference>
<dbReference type="InterPro" id="IPR016185">
    <property type="entry name" value="PreATP-grasp_dom_sf"/>
</dbReference>
<dbReference type="NCBIfam" id="TIGR01205">
    <property type="entry name" value="D_ala_D_alaTIGR"/>
    <property type="match status" value="1"/>
</dbReference>
<dbReference type="NCBIfam" id="NF002527">
    <property type="entry name" value="PRK01966.1-3"/>
    <property type="match status" value="1"/>
</dbReference>
<dbReference type="PANTHER" id="PTHR23132">
    <property type="entry name" value="D-ALANINE--D-ALANINE LIGASE"/>
    <property type="match status" value="1"/>
</dbReference>
<dbReference type="PANTHER" id="PTHR23132:SF25">
    <property type="entry name" value="D-ALANINE--D-ALANINE LIGASE A"/>
    <property type="match status" value="1"/>
</dbReference>
<dbReference type="Pfam" id="PF07478">
    <property type="entry name" value="Dala_Dala_lig_C"/>
    <property type="match status" value="1"/>
</dbReference>
<dbReference type="Pfam" id="PF01820">
    <property type="entry name" value="Dala_Dala_lig_N"/>
    <property type="match status" value="1"/>
</dbReference>
<dbReference type="PIRSF" id="PIRSF039102">
    <property type="entry name" value="Ddl/VanB"/>
    <property type="match status" value="1"/>
</dbReference>
<dbReference type="SUPFAM" id="SSF56059">
    <property type="entry name" value="Glutathione synthetase ATP-binding domain-like"/>
    <property type="match status" value="1"/>
</dbReference>
<dbReference type="SUPFAM" id="SSF52440">
    <property type="entry name" value="PreATP-grasp domain"/>
    <property type="match status" value="1"/>
</dbReference>
<dbReference type="PROSITE" id="PS50975">
    <property type="entry name" value="ATP_GRASP"/>
    <property type="match status" value="1"/>
</dbReference>
<dbReference type="PROSITE" id="PS00843">
    <property type="entry name" value="DALA_DALA_LIGASE_1"/>
    <property type="match status" value="1"/>
</dbReference>
<dbReference type="PROSITE" id="PS00844">
    <property type="entry name" value="DALA_DALA_LIGASE_2"/>
    <property type="match status" value="1"/>
</dbReference>